<feature type="chain" id="PRO_0000314574" description="Chalcone--flavanone isomerase 3">
    <location>
        <begin position="1"/>
        <end position="226"/>
    </location>
</feature>
<feature type="binding site" evidence="1">
    <location>
        <position position="49"/>
    </location>
    <ligand>
        <name>substrate</name>
    </ligand>
</feature>
<feature type="binding site" evidence="1">
    <location>
        <position position="114"/>
    </location>
    <ligand>
        <name>substrate</name>
    </ligand>
</feature>
<feature type="binding site" evidence="1">
    <location>
        <position position="191"/>
    </location>
    <ligand>
        <name>substrate</name>
    </ligand>
</feature>
<feature type="site" description="Important for catalytic activity" evidence="1">
    <location>
        <position position="107"/>
    </location>
</feature>
<organism>
    <name type="scientific">Glycine max</name>
    <name type="common">Soybean</name>
    <name type="synonym">Glycine hispida</name>
    <dbReference type="NCBI Taxonomy" id="3847"/>
    <lineage>
        <taxon>Eukaryota</taxon>
        <taxon>Viridiplantae</taxon>
        <taxon>Streptophyta</taxon>
        <taxon>Embryophyta</taxon>
        <taxon>Tracheophyta</taxon>
        <taxon>Spermatophyta</taxon>
        <taxon>Magnoliopsida</taxon>
        <taxon>eudicotyledons</taxon>
        <taxon>Gunneridae</taxon>
        <taxon>Pentapetalae</taxon>
        <taxon>rosids</taxon>
        <taxon>fabids</taxon>
        <taxon>Fabales</taxon>
        <taxon>Fabaceae</taxon>
        <taxon>Papilionoideae</taxon>
        <taxon>50 kb inversion clade</taxon>
        <taxon>NPAAA clade</taxon>
        <taxon>indigoferoid/millettioid clade</taxon>
        <taxon>Phaseoleae</taxon>
        <taxon>Glycine</taxon>
        <taxon>Glycine subgen. Soja</taxon>
    </lineage>
</organism>
<sequence length="226" mass="24665">MAFPSVTSVTVENVTFPPTVKPPCSPNTFFLAGAGVRGLQIHHAFVKFTAICVYLQYDALSFLSVKWKTKSTHQLTESDQFFSDIVTGPFEKFMQVTMIKPLTGQQYSEKVAENCVAIWRSLGIYTDSEAEAIDKFLSVFKDLTFPPGSSILFTVSPNGSLTISFSGDETIPEVTSAVIENKLLSEAVLESMIGKNGVSPAAKQSLASRLSHLFKEPGVCDPQSHK</sequence>
<proteinExistence type="evidence at transcript level"/>
<accession>A7ISP6</accession>
<dbReference type="EC" id="5.5.1.6"/>
<dbReference type="EMBL" id="DQ191403">
    <property type="protein sequence ID" value="ABA86742.1"/>
    <property type="molecule type" value="Genomic_DNA"/>
</dbReference>
<dbReference type="EMBL" id="DQ191405">
    <property type="protein sequence ID" value="ABA86744.1"/>
    <property type="molecule type" value="mRNA"/>
</dbReference>
<dbReference type="SMR" id="A7ISP6"/>
<dbReference type="FunCoup" id="A7ISP6">
    <property type="interactions" value="1501"/>
</dbReference>
<dbReference type="STRING" id="3847.A7ISP6"/>
<dbReference type="InParanoid" id="A7ISP6"/>
<dbReference type="BRENDA" id="5.5.1.6">
    <property type="organism ID" value="2483"/>
</dbReference>
<dbReference type="UniPathway" id="UPA00154"/>
<dbReference type="Proteomes" id="UP000008827">
    <property type="component" value="Unplaced"/>
</dbReference>
<dbReference type="GO" id="GO:0045430">
    <property type="term" value="F:chalcone isomerase activity"/>
    <property type="evidence" value="ECO:0007669"/>
    <property type="project" value="UniProtKB-EC"/>
</dbReference>
<dbReference type="GO" id="GO:0009813">
    <property type="term" value="P:flavonoid biosynthetic process"/>
    <property type="evidence" value="ECO:0007669"/>
    <property type="project" value="UniProtKB-UniPathway"/>
</dbReference>
<dbReference type="Gene3D" id="1.10.890.20">
    <property type="match status" value="1"/>
</dbReference>
<dbReference type="Gene3D" id="3.50.70.10">
    <property type="match status" value="1"/>
</dbReference>
<dbReference type="InterPro" id="IPR044164">
    <property type="entry name" value="CFI"/>
</dbReference>
<dbReference type="InterPro" id="IPR016087">
    <property type="entry name" value="Chalcone_isomerase"/>
</dbReference>
<dbReference type="InterPro" id="IPR016088">
    <property type="entry name" value="Chalcone_isomerase_3-sand"/>
</dbReference>
<dbReference type="InterPro" id="IPR016089">
    <property type="entry name" value="Chalcone_isomerase_bundle_sf"/>
</dbReference>
<dbReference type="InterPro" id="IPR036298">
    <property type="entry name" value="Chalcone_isomerase_sf"/>
</dbReference>
<dbReference type="PANTHER" id="PTHR28039:SF8">
    <property type="entry name" value="CHALCONE--FLAVANONE ISOMERASE 1-RELATED"/>
    <property type="match status" value="1"/>
</dbReference>
<dbReference type="PANTHER" id="PTHR28039">
    <property type="entry name" value="CHALCONE--FLAVONONE ISOMERASE 1-RELATED"/>
    <property type="match status" value="1"/>
</dbReference>
<dbReference type="Pfam" id="PF02431">
    <property type="entry name" value="Chalcone"/>
    <property type="match status" value="1"/>
</dbReference>
<dbReference type="SUPFAM" id="SSF54626">
    <property type="entry name" value="Chalcone isomerase"/>
    <property type="match status" value="1"/>
</dbReference>
<keyword id="KW-0284">Flavonoid biosynthesis</keyword>
<keyword id="KW-0413">Isomerase</keyword>
<keyword id="KW-1185">Reference proteome</keyword>
<gene>
    <name type="primary">CHI3</name>
</gene>
<name>CFI3_SOYBN</name>
<protein>
    <recommendedName>
        <fullName>Chalcone--flavanone isomerase 3</fullName>
        <shortName>Chalcone isomerase 3</shortName>
        <ecNumber>5.5.1.6</ecNumber>
    </recommendedName>
</protein>
<comment type="function">
    <text evidence="1">Catalyzes the intramolecular cyclization of bicyclic chalcones into tricyclic (S)-flavanones. Responsible for the isomerization of 4,2',4',6'-tetrahydroxychalcone (also termed chalcone) into naringenin (By similarity).</text>
</comment>
<comment type="catalytic activity">
    <reaction>
        <text>a chalcone = a flavanone.</text>
        <dbReference type="EC" id="5.5.1.6"/>
    </reaction>
</comment>
<comment type="pathway">
    <text>Secondary metabolite biosynthesis; flavonoid biosynthesis.</text>
</comment>
<comment type="miscellaneous">
    <text>Part of the biosynthetic pathway for all classes of flavonoids, a large class of secondary plant metabolites, many of which are brightly colored.</text>
</comment>
<comment type="similarity">
    <text evidence="2">Belongs to the chalcone isomerase family.</text>
</comment>
<evidence type="ECO:0000250" key="1"/>
<evidence type="ECO:0000305" key="2"/>
<reference key="1">
    <citation type="submission" date="2005-09" db="EMBL/GenBank/DDBJ databases">
        <title>Molecular cloning of genes encoding two types of chalcone isomerase in soybean (Glycine max).</title>
        <authorList>
            <person name="Liao R.-M."/>
            <person name="Chiu M.-H."/>
            <person name="Chen S.-H."/>
            <person name="Chu T.-M."/>
            <person name="Wang C.-S."/>
        </authorList>
    </citation>
    <scope>NUCLEOTIDE SEQUENCE [GENOMIC DNA / MRNA]</scope>
    <source>
        <strain>cv. L66-14</strain>
        <tissue>Seed coat</tissue>
    </source>
</reference>